<dbReference type="EMBL" id="U37561">
    <property type="protein sequence ID" value="AAC48490.1"/>
    <property type="molecule type" value="mRNA"/>
</dbReference>
<dbReference type="EMBL" id="BC142068">
    <property type="protein sequence ID" value="AAI42069.1"/>
    <property type="molecule type" value="mRNA"/>
</dbReference>
<dbReference type="RefSeq" id="NP_777210.1">
    <property type="nucleotide sequence ID" value="NM_174785.2"/>
</dbReference>
<dbReference type="SMR" id="Q28024"/>
<dbReference type="FunCoup" id="Q28024">
    <property type="interactions" value="1757"/>
</dbReference>
<dbReference type="STRING" id="9913.ENSBTAP00000072397"/>
<dbReference type="iPTMnet" id="Q28024"/>
<dbReference type="PaxDb" id="9913-ENSBTAP00000009857"/>
<dbReference type="PeptideAtlas" id="Q28024"/>
<dbReference type="Ensembl" id="ENSBTAT00000088959.1">
    <property type="protein sequence ID" value="ENSBTAP00000086232.1"/>
    <property type="gene ID" value="ENSBTAG00000061772.1"/>
</dbReference>
<dbReference type="GeneID" id="286850"/>
<dbReference type="KEGG" id="bta:286850"/>
<dbReference type="CTD" id="55970"/>
<dbReference type="VEuPathDB" id="HostDB:ENSBTAG00000054533"/>
<dbReference type="eggNOG" id="KOG4119">
    <property type="taxonomic scope" value="Eukaryota"/>
</dbReference>
<dbReference type="GeneTree" id="ENSGT01100000263497"/>
<dbReference type="HOGENOM" id="CLU_168377_3_1_1"/>
<dbReference type="InParanoid" id="Q28024"/>
<dbReference type="OMA" id="QEKKSCA"/>
<dbReference type="OrthoDB" id="6264244at2759"/>
<dbReference type="TreeFam" id="TF319909"/>
<dbReference type="Reactome" id="R-BTA-1296041">
    <property type="pathway name" value="Activation of G protein gated Potassium channels"/>
</dbReference>
<dbReference type="Reactome" id="R-BTA-202040">
    <property type="pathway name" value="G-protein activation"/>
</dbReference>
<dbReference type="Reactome" id="R-BTA-381676">
    <property type="pathway name" value="Glucagon-like Peptide-1 (GLP1) regulates insulin secretion"/>
</dbReference>
<dbReference type="Reactome" id="R-BTA-392170">
    <property type="pathway name" value="ADP signalling through P2Y purinoceptor 12"/>
</dbReference>
<dbReference type="Reactome" id="R-BTA-392451">
    <property type="pathway name" value="G beta:gamma signalling through PI3Kgamma"/>
</dbReference>
<dbReference type="Reactome" id="R-BTA-392851">
    <property type="pathway name" value="Prostacyclin signalling through prostacyclin receptor"/>
</dbReference>
<dbReference type="Reactome" id="R-BTA-400042">
    <property type="pathway name" value="Adrenaline,noradrenaline inhibits insulin secretion"/>
</dbReference>
<dbReference type="Reactome" id="R-BTA-4086398">
    <property type="pathway name" value="Ca2+ pathway"/>
</dbReference>
<dbReference type="Reactome" id="R-BTA-416476">
    <property type="pathway name" value="G alpha (q) signalling events"/>
</dbReference>
<dbReference type="Reactome" id="R-BTA-416482">
    <property type="pathway name" value="G alpha (12/13) signalling events"/>
</dbReference>
<dbReference type="Reactome" id="R-BTA-418217">
    <property type="pathway name" value="G beta:gamma signalling through PLC beta"/>
</dbReference>
<dbReference type="Reactome" id="R-BTA-418555">
    <property type="pathway name" value="G alpha (s) signalling events"/>
</dbReference>
<dbReference type="Reactome" id="R-BTA-418592">
    <property type="pathway name" value="ADP signalling through P2Y purinoceptor 1"/>
</dbReference>
<dbReference type="Reactome" id="R-BTA-418594">
    <property type="pathway name" value="G alpha (i) signalling events"/>
</dbReference>
<dbReference type="Reactome" id="R-BTA-418597">
    <property type="pathway name" value="G alpha (z) signalling events"/>
</dbReference>
<dbReference type="Reactome" id="R-BTA-420092">
    <property type="pathway name" value="Glucagon-type ligand receptors"/>
</dbReference>
<dbReference type="Reactome" id="R-BTA-428930">
    <property type="pathway name" value="Thromboxane signalling through TP receptor"/>
</dbReference>
<dbReference type="Reactome" id="R-BTA-432040">
    <property type="pathway name" value="Vasopressin regulates renal water homeostasis via Aquaporins"/>
</dbReference>
<dbReference type="Reactome" id="R-BTA-456926">
    <property type="pathway name" value="Thrombin signalling through proteinase activated receptors (PARs)"/>
</dbReference>
<dbReference type="Reactome" id="R-BTA-500657">
    <property type="pathway name" value="Presynaptic function of Kainate receptors"/>
</dbReference>
<dbReference type="Reactome" id="R-BTA-6814122">
    <property type="pathway name" value="Cooperation of PDCL (PhLP1) and TRiC/CCT in G-protein beta folding"/>
</dbReference>
<dbReference type="Reactome" id="R-BTA-8964315">
    <property type="pathway name" value="G beta:gamma signalling through BTK"/>
</dbReference>
<dbReference type="Reactome" id="R-BTA-8964616">
    <property type="pathway name" value="G beta:gamma signalling through CDC42"/>
</dbReference>
<dbReference type="Reactome" id="R-BTA-9009391">
    <property type="pathway name" value="Extra-nuclear estrogen signaling"/>
</dbReference>
<dbReference type="Reactome" id="R-BTA-9856530">
    <property type="pathway name" value="High laminar flow shear stress activates signaling by PIEZO1 and PECAM1:CDH5:KDR in endothelial cells"/>
</dbReference>
<dbReference type="Reactome" id="R-BTA-997272">
    <property type="pathway name" value="Inhibition of voltage gated Ca2+ channels via Gbeta/gamma subunits"/>
</dbReference>
<dbReference type="Proteomes" id="UP000009136">
    <property type="component" value="Chromosome 3"/>
</dbReference>
<dbReference type="Bgee" id="ENSBTAG00000054533">
    <property type="expression patterns" value="Expressed in omental fat pad and 106 other cell types or tissues"/>
</dbReference>
<dbReference type="GO" id="GO:0005834">
    <property type="term" value="C:heterotrimeric G-protein complex"/>
    <property type="evidence" value="ECO:0000318"/>
    <property type="project" value="GO_Central"/>
</dbReference>
<dbReference type="GO" id="GO:0031681">
    <property type="term" value="F:G-protein beta-subunit binding"/>
    <property type="evidence" value="ECO:0000318"/>
    <property type="project" value="GO_Central"/>
</dbReference>
<dbReference type="GO" id="GO:0030165">
    <property type="term" value="F:PDZ domain binding"/>
    <property type="evidence" value="ECO:0007669"/>
    <property type="project" value="Ensembl"/>
</dbReference>
<dbReference type="GO" id="GO:0007186">
    <property type="term" value="P:G protein-coupled receptor signaling pathway"/>
    <property type="evidence" value="ECO:0000318"/>
    <property type="project" value="GO_Central"/>
</dbReference>
<dbReference type="CDD" id="cd00068">
    <property type="entry name" value="GGL"/>
    <property type="match status" value="1"/>
</dbReference>
<dbReference type="FunFam" id="4.10.260.10:FF:000001">
    <property type="entry name" value="Guanine nucleotide-binding protein subunit gamma"/>
    <property type="match status" value="1"/>
</dbReference>
<dbReference type="Gene3D" id="4.10.260.10">
    <property type="entry name" value="Transducin (heterotrimeric G protein), gamma chain"/>
    <property type="match status" value="1"/>
</dbReference>
<dbReference type="InterPro" id="IPR015898">
    <property type="entry name" value="G-protein_gamma-like_dom"/>
</dbReference>
<dbReference type="InterPro" id="IPR036284">
    <property type="entry name" value="GGL_sf"/>
</dbReference>
<dbReference type="InterPro" id="IPR001770">
    <property type="entry name" value="Gprotein-gamma"/>
</dbReference>
<dbReference type="PANTHER" id="PTHR13809">
    <property type="entry name" value="GUANINE NUCLEOTIDE-BINDING PROTEIN GAMMA SUBUNIT"/>
    <property type="match status" value="1"/>
</dbReference>
<dbReference type="Pfam" id="PF00631">
    <property type="entry name" value="G-gamma"/>
    <property type="match status" value="1"/>
</dbReference>
<dbReference type="PRINTS" id="PR00321">
    <property type="entry name" value="GPROTEING"/>
</dbReference>
<dbReference type="SMART" id="SM01224">
    <property type="entry name" value="G_gamma"/>
    <property type="match status" value="1"/>
</dbReference>
<dbReference type="SMART" id="SM00224">
    <property type="entry name" value="GGL"/>
    <property type="match status" value="1"/>
</dbReference>
<dbReference type="SUPFAM" id="SSF48670">
    <property type="entry name" value="Transducin (heterotrimeric G protein), gamma chain"/>
    <property type="match status" value="1"/>
</dbReference>
<dbReference type="PROSITE" id="PS50058">
    <property type="entry name" value="G_PROTEIN_GAMMA"/>
    <property type="match status" value="1"/>
</dbReference>
<sequence>MSSKTASTNNIAQARRTVQQLRMEASIERIKVSKASADLMSYCEEHARNDPLLMGIPTSENPFKDKKTCTIL</sequence>
<keyword id="KW-0007">Acetylation</keyword>
<keyword id="KW-1003">Cell membrane</keyword>
<keyword id="KW-0903">Direct protein sequencing</keyword>
<keyword id="KW-0449">Lipoprotein</keyword>
<keyword id="KW-0472">Membrane</keyword>
<keyword id="KW-0488">Methylation</keyword>
<keyword id="KW-0597">Phosphoprotein</keyword>
<keyword id="KW-0636">Prenylation</keyword>
<keyword id="KW-1185">Reference proteome</keyword>
<keyword id="KW-0807">Transducer</keyword>
<feature type="initiator methionine" description="Removed" evidence="3">
    <location>
        <position position="1"/>
    </location>
</feature>
<feature type="chain" id="PRO_0000012665" description="Guanine nucleotide-binding protein G(I)/G(S)/G(O) subunit gamma-12">
    <location>
        <begin position="2"/>
        <end position="69"/>
    </location>
</feature>
<feature type="propeptide" id="PRO_0000012666" description="Removed in mature form" evidence="1">
    <location>
        <begin position="70"/>
        <end position="72"/>
    </location>
</feature>
<feature type="modified residue" description="N-acetylserine" evidence="3">
    <location>
        <position position="2"/>
    </location>
</feature>
<feature type="modified residue" description="Phosphoserine; by PKC" evidence="4">
    <location>
        <position position="3"/>
    </location>
</feature>
<feature type="modified residue" description="Phosphoserine" evidence="2">
    <location>
        <position position="26"/>
    </location>
</feature>
<feature type="modified residue" description="Phosphotyrosine" evidence="2">
    <location>
        <position position="42"/>
    </location>
</feature>
<feature type="modified residue" description="Cysteine methyl ester" evidence="3">
    <location>
        <position position="69"/>
    </location>
</feature>
<feature type="lipid moiety-binding region" description="S-geranylgeranyl cysteine" evidence="3">
    <location>
        <position position="69"/>
    </location>
</feature>
<proteinExistence type="evidence at protein level"/>
<accession>Q28024</accession>
<accession>A5PJE1</accession>
<reference key="1">
    <citation type="journal article" date="1995" name="J. Biol. Chem.">
        <title>Primary structure of a gamma subunit of G protein, gamma 12, and its phosphorylation by protein kinase C.</title>
        <authorList>
            <person name="Morishita R."/>
            <person name="Nakayama H."/>
            <person name="Isobe T."/>
            <person name="Matsuda T."/>
            <person name="Hashimoto Y."/>
            <person name="Okano T."/>
            <person name="Fukada Y."/>
            <person name="Mizuno K."/>
            <person name="Ohno S."/>
            <person name="Kozawa O."/>
            <person name="Kato K."/>
            <person name="Asano T."/>
        </authorList>
    </citation>
    <scope>NUCLEOTIDE SEQUENCE [MRNA]</scope>
    <scope>ACETYLATION AT SER-2</scope>
    <scope>METHYLATION AT CYS-69</scope>
    <scope>ISOPRENYLATION AT CYS-69</scope>
    <scope>PARTIAL PROTEIN SEQUENCE</scope>
    <scope>MASS SPECTROMETRY</scope>
    <source>
        <tissue>Spleen</tissue>
    </source>
</reference>
<reference key="2">
    <citation type="submission" date="2007-06" db="EMBL/GenBank/DDBJ databases">
        <authorList>
            <consortium name="NIH - Mammalian Gene Collection (MGC) project"/>
        </authorList>
    </citation>
    <scope>NUCLEOTIDE SEQUENCE [LARGE SCALE MRNA]</scope>
    <source>
        <strain>Crossbred X Angus</strain>
        <tissue>Liver</tissue>
    </source>
</reference>
<protein>
    <recommendedName>
        <fullName>Guanine nucleotide-binding protein G(I)/G(S)/G(O) subunit gamma-12</fullName>
    </recommendedName>
    <alternativeName>
        <fullName>Gamma-S1</fullName>
    </alternativeName>
</protein>
<name>GBG12_BOVIN</name>
<evidence type="ECO:0000250" key="1"/>
<evidence type="ECO:0000250" key="2">
    <source>
        <dbReference type="UniProtKB" id="Q9DAS9"/>
    </source>
</evidence>
<evidence type="ECO:0000269" key="3">
    <source>
    </source>
</evidence>
<evidence type="ECO:0000305" key="4"/>
<comment type="function">
    <text>Guanine nucleotide-binding proteins (G proteins) are involved as a modulator or transducer in various transmembrane signaling systems. The beta and gamma chains are required for the GTPase activity, for replacement of GDP by GTP, and for G protein-effector interaction.</text>
</comment>
<comment type="subunit">
    <text>G proteins are composed of 3 units, alpha, beta and gamma.</text>
</comment>
<comment type="subcellular location">
    <subcellularLocation>
        <location evidence="4">Cell membrane</location>
        <topology evidence="4">Lipid-anchor</topology>
        <orientation evidence="4">Cytoplasmic side</orientation>
    </subcellularLocation>
</comment>
<comment type="tissue specificity">
    <text>Present in all tissues tested.</text>
</comment>
<comment type="PTM">
    <text>It is not sure whether phosphorylation by PKC is on Ser-2 or Ser-3.</text>
</comment>
<comment type="mass spectrometry"/>
<comment type="similarity">
    <text evidence="4">Belongs to the G protein gamma family.</text>
</comment>
<organism>
    <name type="scientific">Bos taurus</name>
    <name type="common">Bovine</name>
    <dbReference type="NCBI Taxonomy" id="9913"/>
    <lineage>
        <taxon>Eukaryota</taxon>
        <taxon>Metazoa</taxon>
        <taxon>Chordata</taxon>
        <taxon>Craniata</taxon>
        <taxon>Vertebrata</taxon>
        <taxon>Euteleostomi</taxon>
        <taxon>Mammalia</taxon>
        <taxon>Eutheria</taxon>
        <taxon>Laurasiatheria</taxon>
        <taxon>Artiodactyla</taxon>
        <taxon>Ruminantia</taxon>
        <taxon>Pecora</taxon>
        <taxon>Bovidae</taxon>
        <taxon>Bovinae</taxon>
        <taxon>Bos</taxon>
    </lineage>
</organism>
<gene>
    <name type="primary">GNG12</name>
    <name type="synonym">GNGT12</name>
</gene>